<name>Y1530_RUBXD</name>
<organism>
    <name type="scientific">Rubrobacter xylanophilus (strain DSM 9941 / JCM 11954 / NBRC 16129 / PRD-1)</name>
    <dbReference type="NCBI Taxonomy" id="266117"/>
    <lineage>
        <taxon>Bacteria</taxon>
        <taxon>Bacillati</taxon>
        <taxon>Actinomycetota</taxon>
        <taxon>Rubrobacteria</taxon>
        <taxon>Rubrobacterales</taxon>
        <taxon>Rubrobacteraceae</taxon>
        <taxon>Rubrobacter</taxon>
    </lineage>
</organism>
<feature type="chain" id="PRO_0000322700" description="UPF0758 protein Rxyl_1530">
    <location>
        <begin position="1"/>
        <end position="227"/>
    </location>
</feature>
<feature type="domain" description="MPN" evidence="1">
    <location>
        <begin position="106"/>
        <end position="227"/>
    </location>
</feature>
<feature type="short sequence motif" description="JAMM motif" evidence="1">
    <location>
        <begin position="177"/>
        <end position="190"/>
    </location>
</feature>
<feature type="binding site" evidence="1">
    <location>
        <position position="177"/>
    </location>
    <ligand>
        <name>Zn(2+)</name>
        <dbReference type="ChEBI" id="CHEBI:29105"/>
        <note>catalytic</note>
    </ligand>
</feature>
<feature type="binding site" evidence="1">
    <location>
        <position position="179"/>
    </location>
    <ligand>
        <name>Zn(2+)</name>
        <dbReference type="ChEBI" id="CHEBI:29105"/>
        <note>catalytic</note>
    </ligand>
</feature>
<feature type="binding site" evidence="1">
    <location>
        <position position="190"/>
    </location>
    <ligand>
        <name>Zn(2+)</name>
        <dbReference type="ChEBI" id="CHEBI:29105"/>
        <note>catalytic</note>
    </ligand>
</feature>
<comment type="similarity">
    <text evidence="2">Belongs to the UPF0758 family.</text>
</comment>
<protein>
    <recommendedName>
        <fullName>UPF0758 protein Rxyl_1530</fullName>
    </recommendedName>
</protein>
<evidence type="ECO:0000255" key="1">
    <source>
        <dbReference type="PROSITE-ProRule" id="PRU01182"/>
    </source>
</evidence>
<evidence type="ECO:0000305" key="2"/>
<dbReference type="EMBL" id="CP000386">
    <property type="protein sequence ID" value="ABG04492.1"/>
    <property type="molecule type" value="Genomic_DNA"/>
</dbReference>
<dbReference type="RefSeq" id="WP_011564509.1">
    <property type="nucleotide sequence ID" value="NC_008148.1"/>
</dbReference>
<dbReference type="SMR" id="Q1AVT6"/>
<dbReference type="STRING" id="266117.Rxyl_1530"/>
<dbReference type="KEGG" id="rxy:Rxyl_1530"/>
<dbReference type="eggNOG" id="COG2003">
    <property type="taxonomic scope" value="Bacteria"/>
</dbReference>
<dbReference type="HOGENOM" id="CLU_073529_0_2_11"/>
<dbReference type="OrthoDB" id="9804482at2"/>
<dbReference type="PhylomeDB" id="Q1AVT6"/>
<dbReference type="Proteomes" id="UP000006637">
    <property type="component" value="Chromosome"/>
</dbReference>
<dbReference type="GO" id="GO:0046872">
    <property type="term" value="F:metal ion binding"/>
    <property type="evidence" value="ECO:0007669"/>
    <property type="project" value="UniProtKB-KW"/>
</dbReference>
<dbReference type="GO" id="GO:0008237">
    <property type="term" value="F:metallopeptidase activity"/>
    <property type="evidence" value="ECO:0007669"/>
    <property type="project" value="UniProtKB-KW"/>
</dbReference>
<dbReference type="GO" id="GO:0006508">
    <property type="term" value="P:proteolysis"/>
    <property type="evidence" value="ECO:0007669"/>
    <property type="project" value="UniProtKB-KW"/>
</dbReference>
<dbReference type="CDD" id="cd08071">
    <property type="entry name" value="MPN_DUF2466"/>
    <property type="match status" value="1"/>
</dbReference>
<dbReference type="Gene3D" id="1.10.150.20">
    <property type="entry name" value="5' to 3' exonuclease, C-terminal subdomain"/>
    <property type="match status" value="1"/>
</dbReference>
<dbReference type="Gene3D" id="3.40.140.10">
    <property type="entry name" value="Cytidine Deaminase, domain 2"/>
    <property type="match status" value="1"/>
</dbReference>
<dbReference type="InterPro" id="IPR037518">
    <property type="entry name" value="MPN"/>
</dbReference>
<dbReference type="InterPro" id="IPR025657">
    <property type="entry name" value="RadC_JAB"/>
</dbReference>
<dbReference type="InterPro" id="IPR010994">
    <property type="entry name" value="RuvA_2-like"/>
</dbReference>
<dbReference type="InterPro" id="IPR001405">
    <property type="entry name" value="UPF0758"/>
</dbReference>
<dbReference type="InterPro" id="IPR020891">
    <property type="entry name" value="UPF0758_CS"/>
</dbReference>
<dbReference type="InterPro" id="IPR046778">
    <property type="entry name" value="UPF0758_N"/>
</dbReference>
<dbReference type="NCBIfam" id="NF000642">
    <property type="entry name" value="PRK00024.1"/>
    <property type="match status" value="1"/>
</dbReference>
<dbReference type="NCBIfam" id="TIGR00608">
    <property type="entry name" value="radc"/>
    <property type="match status" value="1"/>
</dbReference>
<dbReference type="PANTHER" id="PTHR30471">
    <property type="entry name" value="DNA REPAIR PROTEIN RADC"/>
    <property type="match status" value="1"/>
</dbReference>
<dbReference type="PANTHER" id="PTHR30471:SF3">
    <property type="entry name" value="UPF0758 PROTEIN YEES-RELATED"/>
    <property type="match status" value="1"/>
</dbReference>
<dbReference type="Pfam" id="PF04002">
    <property type="entry name" value="RadC"/>
    <property type="match status" value="1"/>
</dbReference>
<dbReference type="Pfam" id="PF20582">
    <property type="entry name" value="UPF0758_N"/>
    <property type="match status" value="1"/>
</dbReference>
<dbReference type="SUPFAM" id="SSF47781">
    <property type="entry name" value="RuvA domain 2-like"/>
    <property type="match status" value="1"/>
</dbReference>
<dbReference type="PROSITE" id="PS50249">
    <property type="entry name" value="MPN"/>
    <property type="match status" value="1"/>
</dbReference>
<dbReference type="PROSITE" id="PS01302">
    <property type="entry name" value="UPF0758"/>
    <property type="match status" value="1"/>
</dbReference>
<gene>
    <name type="ordered locus">Rxyl_1530</name>
</gene>
<keyword id="KW-0378">Hydrolase</keyword>
<keyword id="KW-0479">Metal-binding</keyword>
<keyword id="KW-0482">Metalloprotease</keyword>
<keyword id="KW-0645">Protease</keyword>
<keyword id="KW-1185">Reference proteome</keyword>
<keyword id="KW-0862">Zinc</keyword>
<sequence length="227" mass="24074">MGRRYTIKQLPPELRPRERLLAGGASALSDAELLGVLFGIGSREKTAVELAGDVISGAGGLHNLFGASVHELKQVKGIGEAKACILLAALELARRLSVARNPGRPVISSPADVDGLLRGRIANLDREHFVVVLLNTKNEVIEAPTISVGTLSSSLVHPREVFKPAIRASAASVVLAHNHPSGRVEPSREDREVTGRVAEAGGIIGIEVLDHVIVGEGYFSMKEHGML</sequence>
<accession>Q1AVT6</accession>
<proteinExistence type="inferred from homology"/>
<reference key="1">
    <citation type="submission" date="2006-06" db="EMBL/GenBank/DDBJ databases">
        <title>Complete sequence of Rubrobacter xylanophilus DSM 9941.</title>
        <authorList>
            <consortium name="US DOE Joint Genome Institute"/>
            <person name="Copeland A."/>
            <person name="Lucas S."/>
            <person name="Lapidus A."/>
            <person name="Barry K."/>
            <person name="Detter J.C."/>
            <person name="Glavina del Rio T."/>
            <person name="Hammon N."/>
            <person name="Israni S."/>
            <person name="Dalin E."/>
            <person name="Tice H."/>
            <person name="Pitluck S."/>
            <person name="Munk A.C."/>
            <person name="Brettin T."/>
            <person name="Bruce D."/>
            <person name="Han C."/>
            <person name="Tapia R."/>
            <person name="Gilna P."/>
            <person name="Schmutz J."/>
            <person name="Larimer F."/>
            <person name="Land M."/>
            <person name="Hauser L."/>
            <person name="Kyrpides N."/>
            <person name="Lykidis A."/>
            <person name="da Costa M.S."/>
            <person name="Rainey F.A."/>
            <person name="Empadinhas N."/>
            <person name="Jolivet E."/>
            <person name="Battista J.R."/>
            <person name="Richardson P."/>
        </authorList>
    </citation>
    <scope>NUCLEOTIDE SEQUENCE [LARGE SCALE GENOMIC DNA]</scope>
    <source>
        <strain>DSM 9941 / JCM 11954 / NBRC 16129 / PRD-1</strain>
    </source>
</reference>